<gene>
    <name evidence="1" type="primary">rpoB</name>
    <name type="ordered locus">CE0497</name>
</gene>
<organism>
    <name type="scientific">Corynebacterium efficiens (strain DSM 44549 / YS-314 / AJ 12310 / JCM 11189 / NBRC 100395)</name>
    <dbReference type="NCBI Taxonomy" id="196164"/>
    <lineage>
        <taxon>Bacteria</taxon>
        <taxon>Bacillati</taxon>
        <taxon>Actinomycetota</taxon>
        <taxon>Actinomycetes</taxon>
        <taxon>Mycobacteriales</taxon>
        <taxon>Corynebacteriaceae</taxon>
        <taxon>Corynebacterium</taxon>
    </lineage>
</organism>
<name>RPOB_COREF</name>
<reference key="1">
    <citation type="journal article" date="2003" name="Genome Res.">
        <title>Comparative complete genome sequence analysis of the amino acid replacements responsible for the thermostability of Corynebacterium efficiens.</title>
        <authorList>
            <person name="Nishio Y."/>
            <person name="Nakamura Y."/>
            <person name="Kawarabayasi Y."/>
            <person name="Usuda Y."/>
            <person name="Kimura E."/>
            <person name="Sugimoto S."/>
            <person name="Matsui K."/>
            <person name="Yamagishi A."/>
            <person name="Kikuchi H."/>
            <person name="Ikeo K."/>
            <person name="Gojobori T."/>
        </authorList>
    </citation>
    <scope>NUCLEOTIDE SEQUENCE [LARGE SCALE GENOMIC DNA]</scope>
    <source>
        <strain>DSM 44549 / YS-314 / AJ 12310 / JCM 11189 / NBRC 100395</strain>
    </source>
</reference>
<feature type="chain" id="PRO_0000047888" description="DNA-directed RNA polymerase subunit beta">
    <location>
        <begin position="1"/>
        <end position="1171"/>
    </location>
</feature>
<protein>
    <recommendedName>
        <fullName evidence="1">DNA-directed RNA polymerase subunit beta</fullName>
        <shortName evidence="1">RNAP subunit beta</shortName>
        <ecNumber evidence="1">2.7.7.6</ecNumber>
    </recommendedName>
    <alternativeName>
        <fullName evidence="1">RNA polymerase subunit beta</fullName>
    </alternativeName>
    <alternativeName>
        <fullName evidence="1">Transcriptase subunit beta</fullName>
    </alternativeName>
</protein>
<accession>Q8FS97</accession>
<comment type="function">
    <text evidence="1">DNA-dependent RNA polymerase catalyzes the transcription of DNA into RNA using the four ribonucleoside triphosphates as substrates.</text>
</comment>
<comment type="catalytic activity">
    <reaction evidence="1">
        <text>RNA(n) + a ribonucleoside 5'-triphosphate = RNA(n+1) + diphosphate</text>
        <dbReference type="Rhea" id="RHEA:21248"/>
        <dbReference type="Rhea" id="RHEA-COMP:14527"/>
        <dbReference type="Rhea" id="RHEA-COMP:17342"/>
        <dbReference type="ChEBI" id="CHEBI:33019"/>
        <dbReference type="ChEBI" id="CHEBI:61557"/>
        <dbReference type="ChEBI" id="CHEBI:140395"/>
        <dbReference type="EC" id="2.7.7.6"/>
    </reaction>
</comment>
<comment type="subunit">
    <text evidence="1">The RNAP catalytic core consists of 2 alpha, 1 beta, 1 beta' and 1 omega subunit. When a sigma factor is associated with the core the holoenzyme is formed, which can initiate transcription.</text>
</comment>
<comment type="similarity">
    <text evidence="1">Belongs to the RNA polymerase beta chain family.</text>
</comment>
<proteinExistence type="inferred from homology"/>
<keyword id="KW-0240">DNA-directed RNA polymerase</keyword>
<keyword id="KW-0548">Nucleotidyltransferase</keyword>
<keyword id="KW-1185">Reference proteome</keyword>
<keyword id="KW-0804">Transcription</keyword>
<keyword id="KW-0808">Transferase</keyword>
<dbReference type="EC" id="2.7.7.6" evidence="1"/>
<dbReference type="EMBL" id="BA000035">
    <property type="protein sequence ID" value="BAC17307.1"/>
    <property type="molecule type" value="Genomic_DNA"/>
</dbReference>
<dbReference type="SMR" id="Q8FS97"/>
<dbReference type="STRING" id="196164.gene:10740899"/>
<dbReference type="KEGG" id="cef:CE0497"/>
<dbReference type="eggNOG" id="COG0085">
    <property type="taxonomic scope" value="Bacteria"/>
</dbReference>
<dbReference type="HOGENOM" id="CLU_000524_4_1_11"/>
<dbReference type="Proteomes" id="UP000001409">
    <property type="component" value="Chromosome"/>
</dbReference>
<dbReference type="GO" id="GO:0000428">
    <property type="term" value="C:DNA-directed RNA polymerase complex"/>
    <property type="evidence" value="ECO:0007669"/>
    <property type="project" value="UniProtKB-KW"/>
</dbReference>
<dbReference type="GO" id="GO:0003677">
    <property type="term" value="F:DNA binding"/>
    <property type="evidence" value="ECO:0007669"/>
    <property type="project" value="UniProtKB-UniRule"/>
</dbReference>
<dbReference type="GO" id="GO:0003899">
    <property type="term" value="F:DNA-directed RNA polymerase activity"/>
    <property type="evidence" value="ECO:0007669"/>
    <property type="project" value="UniProtKB-UniRule"/>
</dbReference>
<dbReference type="GO" id="GO:0032549">
    <property type="term" value="F:ribonucleoside binding"/>
    <property type="evidence" value="ECO:0007669"/>
    <property type="project" value="InterPro"/>
</dbReference>
<dbReference type="GO" id="GO:0006351">
    <property type="term" value="P:DNA-templated transcription"/>
    <property type="evidence" value="ECO:0007669"/>
    <property type="project" value="UniProtKB-UniRule"/>
</dbReference>
<dbReference type="CDD" id="cd00653">
    <property type="entry name" value="RNA_pol_B_RPB2"/>
    <property type="match status" value="1"/>
</dbReference>
<dbReference type="Gene3D" id="2.40.50.100">
    <property type="match status" value="1"/>
</dbReference>
<dbReference type="Gene3D" id="2.40.50.150">
    <property type="match status" value="1"/>
</dbReference>
<dbReference type="Gene3D" id="3.90.1100.10">
    <property type="match status" value="1"/>
</dbReference>
<dbReference type="Gene3D" id="2.30.150.10">
    <property type="entry name" value="DNA-directed RNA polymerase, beta subunit, external 1 domain"/>
    <property type="match status" value="1"/>
</dbReference>
<dbReference type="Gene3D" id="2.40.270.10">
    <property type="entry name" value="DNA-directed RNA polymerase, subunit 2, domain 6"/>
    <property type="match status" value="1"/>
</dbReference>
<dbReference type="Gene3D" id="3.90.1800.10">
    <property type="entry name" value="RNA polymerase alpha subunit dimerisation domain"/>
    <property type="match status" value="1"/>
</dbReference>
<dbReference type="Gene3D" id="3.90.1110.10">
    <property type="entry name" value="RNA polymerase Rpb2, domain 2"/>
    <property type="match status" value="1"/>
</dbReference>
<dbReference type="HAMAP" id="MF_01321">
    <property type="entry name" value="RNApol_bact_RpoB"/>
    <property type="match status" value="1"/>
</dbReference>
<dbReference type="InterPro" id="IPR042107">
    <property type="entry name" value="DNA-dir_RNA_pol_bsu_ext_1_sf"/>
</dbReference>
<dbReference type="InterPro" id="IPR019462">
    <property type="entry name" value="DNA-dir_RNA_pol_bsu_external_1"/>
</dbReference>
<dbReference type="InterPro" id="IPR015712">
    <property type="entry name" value="DNA-dir_RNA_pol_su2"/>
</dbReference>
<dbReference type="InterPro" id="IPR007120">
    <property type="entry name" value="DNA-dir_RNAP_su2_dom"/>
</dbReference>
<dbReference type="InterPro" id="IPR037033">
    <property type="entry name" value="DNA-dir_RNAP_su2_hyb_sf"/>
</dbReference>
<dbReference type="InterPro" id="IPR010243">
    <property type="entry name" value="RNA_pol_bsu_bac"/>
</dbReference>
<dbReference type="InterPro" id="IPR007121">
    <property type="entry name" value="RNA_pol_bsu_CS"/>
</dbReference>
<dbReference type="InterPro" id="IPR007644">
    <property type="entry name" value="RNA_pol_bsu_protrusion"/>
</dbReference>
<dbReference type="InterPro" id="IPR007642">
    <property type="entry name" value="RNA_pol_Rpb2_2"/>
</dbReference>
<dbReference type="InterPro" id="IPR037034">
    <property type="entry name" value="RNA_pol_Rpb2_2_sf"/>
</dbReference>
<dbReference type="InterPro" id="IPR007645">
    <property type="entry name" value="RNA_pol_Rpb2_3"/>
</dbReference>
<dbReference type="InterPro" id="IPR007641">
    <property type="entry name" value="RNA_pol_Rpb2_7"/>
</dbReference>
<dbReference type="InterPro" id="IPR014724">
    <property type="entry name" value="RNA_pol_RPB2_OB-fold"/>
</dbReference>
<dbReference type="NCBIfam" id="NF001616">
    <property type="entry name" value="PRK00405.1"/>
    <property type="match status" value="1"/>
</dbReference>
<dbReference type="NCBIfam" id="TIGR02013">
    <property type="entry name" value="rpoB"/>
    <property type="match status" value="1"/>
</dbReference>
<dbReference type="PANTHER" id="PTHR20856">
    <property type="entry name" value="DNA-DIRECTED RNA POLYMERASE I SUBUNIT 2"/>
    <property type="match status" value="1"/>
</dbReference>
<dbReference type="Pfam" id="PF04563">
    <property type="entry name" value="RNA_pol_Rpb2_1"/>
    <property type="match status" value="1"/>
</dbReference>
<dbReference type="Pfam" id="PF04561">
    <property type="entry name" value="RNA_pol_Rpb2_2"/>
    <property type="match status" value="1"/>
</dbReference>
<dbReference type="Pfam" id="PF04565">
    <property type="entry name" value="RNA_pol_Rpb2_3"/>
    <property type="match status" value="1"/>
</dbReference>
<dbReference type="Pfam" id="PF10385">
    <property type="entry name" value="RNA_pol_Rpb2_45"/>
    <property type="match status" value="1"/>
</dbReference>
<dbReference type="Pfam" id="PF00562">
    <property type="entry name" value="RNA_pol_Rpb2_6"/>
    <property type="match status" value="1"/>
</dbReference>
<dbReference type="Pfam" id="PF04560">
    <property type="entry name" value="RNA_pol_Rpb2_7"/>
    <property type="match status" value="1"/>
</dbReference>
<dbReference type="SUPFAM" id="SSF64484">
    <property type="entry name" value="beta and beta-prime subunits of DNA dependent RNA-polymerase"/>
    <property type="match status" value="1"/>
</dbReference>
<dbReference type="PROSITE" id="PS01166">
    <property type="entry name" value="RNA_POL_BETA"/>
    <property type="match status" value="1"/>
</dbReference>
<evidence type="ECO:0000255" key="1">
    <source>
        <dbReference type="HAMAP-Rule" id="MF_01321"/>
    </source>
</evidence>
<sequence length="1171" mass="129483">MIHPREVLEGPILAVSRQTKSVVDIPGAPKRYSFAKVSAPIEVPGLLDLQLDSFAWLIGTPEWRARQQEEFGEGARITSGLENILEELSPIQDYSGNMSLSLSEPRFEPVKNTIDEAKEKDINYAAPLYVTAEFVNNTTGEIKSQTVFIGDFPMMTDKGTFIINGTERVVVSQLVRSPGVYFDQTIDKSTERPLHAVKVIPSRGAWLEFDVDKRDSVGVRIDRKRRQPVTVLLKALGWTTEQITERFGFSEIMMSTLESDGVANTDEALLEIYRKQRPGEQPTRDLAQSLLDNSFFKAKRYDLAKVGRYKINRKLGLGGDNDGLMTLTEEDIATAIEYLVRLHAGERVMTSPTGEEIPVETDDIDHFGNRRLRTVGELIQNQVRVGLSRMERVVRERMTTQDAESITPTSLINVRPVSAAIREFFGTSQLSQFMDQNNSLSGLTHKRRLSALGPGGLSRERAGIEVRDVHPSHYGRMCPIETPEGPNIGLIGSLASYARVNPFGFIETPYRRVIDGKLTDQIDYLTADEEDRFVVAQANTHYDEDGVITDESVTVRLKDGDIAMVSRTDVDYMDVSPRQMVSVGTAMIPFLEHDDANRALMGANMQKQAVPLVRAEAPFVGTGMELRAAYDAGDLVITPKAGVVENVTADIVTIMDDEGKRDTYVLRKFQRTNQGTSYNQKPLVNQGDRVEAGQVIADGPGTFNGEMSLGRNLLVAFMPWEGHNYEDAIILNQNIVEQDILTSIHIEEHEIDARDTKLGAEEITRDIPNVSEEVLKDLDERGIVRIGADVRDGDILVGKVTPKGETELTPEERLLRAIFGEKAREVRDTSMKVPHGETGKVIGVRRFSREDDDDLAPGVNEMIRVYVAQKRKIQDGDKLAGRHGNKGVVGKILPQEDMPFLPDGTPVDIILNTHGVPRRMNIGQVLETHLGWLAAAGWSVDPEDPKNAELIKTLPKELYDVPAGSLTATPVFDGASNEELAGLLANSRPNRDGDVMVNADGKATLIDGRSGEPYPYPVSIGYMYMLKLHHLVDEKIHARSTGPYSMITQQPLGGKAQFGGQRFGEMEVWAMQAYGAAYTLQELLTIKSDDVVGRVKVYEAIVKGENIPDPGIPESFKVLLKELQSLCLNVEVLSADGTPMELAGDDDDFDQAGASLGINLSRDERSDADTA</sequence>